<accession>Q28611</accession>
<comment type="function">
    <text evidence="1 2">UDP-glucuronosyltransferase (UGT) that catalyzes phase II biotransformation reactions in which lipophilic substrates are conjugated with glucuronic acid to facilitate their inactivation and excretion from the body. Essential for the elimination and detoxification of drugs, xenobiotics and endogenous compounds. Involved in the glucuronidation of arachidonic acid (AA) and AA-derived eicosanoids including 15-HETE and 20-HETE (By similarity). Conjugates small planar phenolic molecules such as 4-nitrophenol, 1-naphthol, and 4-methylumbelliferone. The bulky phenol 4-hydroxybiphenyl, androgens and estrogens are not substrates. 2-hydroxybiphenyl is an excellent substrate (By similarity). Involved in the glucuronidation of the phytochemical ferulic acid at the phenolic or the carboxylic acid group (By similarity).</text>
</comment>
<comment type="catalytic activity">
    <reaction evidence="1">
        <text>glucuronate acceptor + UDP-alpha-D-glucuronate = acceptor beta-D-glucuronoside + UDP + H(+)</text>
        <dbReference type="Rhea" id="RHEA:21032"/>
        <dbReference type="ChEBI" id="CHEBI:15378"/>
        <dbReference type="ChEBI" id="CHEBI:58052"/>
        <dbReference type="ChEBI" id="CHEBI:58223"/>
        <dbReference type="ChEBI" id="CHEBI:132367"/>
        <dbReference type="ChEBI" id="CHEBI:132368"/>
        <dbReference type="EC" id="2.4.1.17"/>
    </reaction>
    <physiologicalReaction direction="left-to-right" evidence="1">
        <dbReference type="Rhea" id="RHEA:21033"/>
    </physiologicalReaction>
</comment>
<comment type="catalytic activity">
    <reaction evidence="1">
        <text>(5Z,8Z,11Z,14Z)-eicosatetraenoate + UDP-alpha-D-glucuronate = O-[(5Z),(8Z),(11Z),(14Z)-eicosatetraenoyl]-beta-D-glucuronate + UDP</text>
        <dbReference type="Rhea" id="RHEA:79915"/>
        <dbReference type="ChEBI" id="CHEBI:32395"/>
        <dbReference type="ChEBI" id="CHEBI:58052"/>
        <dbReference type="ChEBI" id="CHEBI:58223"/>
        <dbReference type="ChEBI" id="CHEBI:231327"/>
    </reaction>
    <physiologicalReaction direction="left-to-right" evidence="1">
        <dbReference type="Rhea" id="RHEA:79916"/>
    </physiologicalReaction>
</comment>
<comment type="catalytic activity">
    <reaction evidence="1">
        <text>15-hydroxy-(5Z,8Z,11Z,13E)-eicosatetraenoate + UDP-alpha-D-glucuronate = 15-O-(beta-D-glucuronosyl)-(5Z,8Z,11Z,14Z)-eicosatetraenoate + UDP + H(+)</text>
        <dbReference type="Rhea" id="RHEA:79919"/>
        <dbReference type="ChEBI" id="CHEBI:15378"/>
        <dbReference type="ChEBI" id="CHEBI:58052"/>
        <dbReference type="ChEBI" id="CHEBI:58223"/>
        <dbReference type="ChEBI" id="CHEBI:78832"/>
        <dbReference type="ChEBI" id="CHEBI:231329"/>
    </reaction>
    <physiologicalReaction direction="left-to-right" evidence="1">
        <dbReference type="Rhea" id="RHEA:79920"/>
    </physiologicalReaction>
</comment>
<comment type="catalytic activity">
    <reaction evidence="1">
        <text>(E)-ferulate + UDP-alpha-D-glucuronate = (E)-4-O-(beta-D-glucuronosyl)-ferulate + UDP + H(+)</text>
        <dbReference type="Rhea" id="RHEA:79951"/>
        <dbReference type="ChEBI" id="CHEBI:15378"/>
        <dbReference type="ChEBI" id="CHEBI:29749"/>
        <dbReference type="ChEBI" id="CHEBI:58052"/>
        <dbReference type="ChEBI" id="CHEBI:58223"/>
        <dbReference type="ChEBI" id="CHEBI:231331"/>
    </reaction>
    <physiologicalReaction direction="left-to-right" evidence="1">
        <dbReference type="Rhea" id="RHEA:79952"/>
    </physiologicalReaction>
</comment>
<comment type="catalytic activity">
    <reaction evidence="1">
        <text>(E)-ferulate + UDP-alpha-D-glucuronate = (E)-ferulic acid beta-D-glucuronate ester + UDP</text>
        <dbReference type="Rhea" id="RHEA:79955"/>
        <dbReference type="ChEBI" id="CHEBI:29749"/>
        <dbReference type="ChEBI" id="CHEBI:58052"/>
        <dbReference type="ChEBI" id="CHEBI:58223"/>
        <dbReference type="ChEBI" id="CHEBI:231332"/>
    </reaction>
    <physiologicalReaction direction="left-to-right" evidence="1">
        <dbReference type="Rhea" id="RHEA:79956"/>
    </physiologicalReaction>
</comment>
<comment type="subcellular location">
    <subcellularLocation>
        <location>Microsome</location>
    </subcellularLocation>
    <subcellularLocation>
        <location evidence="4">Endoplasmic reticulum membrane</location>
        <topology evidence="4">Single-pass membrane protein</topology>
    </subcellularLocation>
</comment>
<comment type="alternative products">
    <event type="alternative splicing"/>
    <isoform>
        <id>Q28611-1</id>
        <name>1</name>
        <sequence type="displayed"/>
    </isoform>
    <text>A number of isoforms may be produced. Isoforms may have a different N-terminal domain and a common C-terminal domain of 245 residues.</text>
</comment>
<comment type="induction">
    <text>By dioxin.</text>
</comment>
<comment type="similarity">
    <text evidence="4">Belongs to the UDP-glycosyltransferase family.</text>
</comment>
<keyword id="KW-0025">Alternative splicing</keyword>
<keyword id="KW-0256">Endoplasmic reticulum</keyword>
<keyword id="KW-0325">Glycoprotein</keyword>
<keyword id="KW-0328">Glycosyltransferase</keyword>
<keyword id="KW-0472">Membrane</keyword>
<keyword id="KW-0492">Microsome</keyword>
<keyword id="KW-1185">Reference proteome</keyword>
<keyword id="KW-0732">Signal</keyword>
<keyword id="KW-0808">Transferase</keyword>
<keyword id="KW-0812">Transmembrane</keyword>
<keyword id="KW-1133">Transmembrane helix</keyword>
<feature type="signal peptide" evidence="3">
    <location>
        <begin position="1"/>
        <end position="26"/>
    </location>
</feature>
<feature type="chain" id="PRO_0000036018" description="UDP-glucuronosyltransferase 1A6">
    <location>
        <begin position="27"/>
        <end position="531"/>
    </location>
</feature>
<feature type="transmembrane region" description="Helical" evidence="3">
    <location>
        <begin position="489"/>
        <end position="505"/>
    </location>
</feature>
<feature type="glycosylation site" description="N-linked (GlcNAc...) asparagine" evidence="3">
    <location>
        <position position="294"/>
    </location>
</feature>
<dbReference type="EC" id="2.4.1.17" evidence="1"/>
<dbReference type="EMBL" id="U09030">
    <property type="protein sequence ID" value="AAA51867.1"/>
    <property type="molecule type" value="mRNA"/>
</dbReference>
<dbReference type="PIR" id="B55788">
    <property type="entry name" value="B55788"/>
</dbReference>
<dbReference type="RefSeq" id="NP_001082788.1">
    <molecule id="Q28611-1"/>
    <property type="nucleotide sequence ID" value="NM_001089319.1"/>
</dbReference>
<dbReference type="SMR" id="Q28611"/>
<dbReference type="FunCoup" id="Q28611">
    <property type="interactions" value="120"/>
</dbReference>
<dbReference type="CAZy" id="GT1">
    <property type="family name" value="Glycosyltransferase Family 1"/>
</dbReference>
<dbReference type="GlyCosmos" id="Q28611">
    <property type="glycosylation" value="1 site, No reported glycans"/>
</dbReference>
<dbReference type="GeneID" id="100037718"/>
<dbReference type="KEGG" id="ocu:100037718"/>
<dbReference type="CTD" id="100037718"/>
<dbReference type="eggNOG" id="KOG1192">
    <property type="taxonomic scope" value="Eukaryota"/>
</dbReference>
<dbReference type="InParanoid" id="Q28611"/>
<dbReference type="OrthoDB" id="5835829at2759"/>
<dbReference type="Proteomes" id="UP000001811">
    <property type="component" value="Unplaced"/>
</dbReference>
<dbReference type="GO" id="GO:0005789">
    <property type="term" value="C:endoplasmic reticulum membrane"/>
    <property type="evidence" value="ECO:0007669"/>
    <property type="project" value="UniProtKB-SubCell"/>
</dbReference>
<dbReference type="GO" id="GO:0015020">
    <property type="term" value="F:glucuronosyltransferase activity"/>
    <property type="evidence" value="ECO:0000250"/>
    <property type="project" value="UniProtKB"/>
</dbReference>
<dbReference type="CDD" id="cd03784">
    <property type="entry name" value="GT1_Gtf-like"/>
    <property type="match status" value="1"/>
</dbReference>
<dbReference type="FunFam" id="3.40.50.2000:FF:000001">
    <property type="entry name" value="UDP-glucuronosyltransferase"/>
    <property type="match status" value="1"/>
</dbReference>
<dbReference type="Gene3D" id="3.40.50.2000">
    <property type="entry name" value="Glycogen Phosphorylase B"/>
    <property type="match status" value="2"/>
</dbReference>
<dbReference type="InterPro" id="IPR050271">
    <property type="entry name" value="UDP-glycosyltransferase"/>
</dbReference>
<dbReference type="InterPro" id="IPR002213">
    <property type="entry name" value="UDP_glucos_trans"/>
</dbReference>
<dbReference type="InterPro" id="IPR035595">
    <property type="entry name" value="UDP_glycos_trans_CS"/>
</dbReference>
<dbReference type="PANTHER" id="PTHR48043">
    <property type="entry name" value="EG:EG0003.4 PROTEIN-RELATED"/>
    <property type="match status" value="1"/>
</dbReference>
<dbReference type="PANTHER" id="PTHR48043:SF161">
    <property type="entry name" value="UDP GLUCURONOSYLTRANSFERASE FAMILY 1 MEMBER A1"/>
    <property type="match status" value="1"/>
</dbReference>
<dbReference type="Pfam" id="PF00201">
    <property type="entry name" value="UDPGT"/>
    <property type="match status" value="1"/>
</dbReference>
<dbReference type="SUPFAM" id="SSF53756">
    <property type="entry name" value="UDP-Glycosyltransferase/glycogen phosphorylase"/>
    <property type="match status" value="1"/>
</dbReference>
<dbReference type="PROSITE" id="PS00375">
    <property type="entry name" value="UDPGT"/>
    <property type="match status" value="1"/>
</dbReference>
<protein>
    <recommendedName>
        <fullName>UDP-glucuronosyltransferase 1A6</fullName>
        <shortName evidence="1">UGT1A6</shortName>
        <ecNumber evidence="1">2.4.1.17</ecNumber>
    </recommendedName>
    <alternativeName>
        <fullName>UDP-glucuronosyltransferase 1-6</fullName>
        <shortName>UDPGT 1-6</shortName>
        <shortName>UGT1*6</shortName>
        <shortName>UGT1-06</shortName>
        <shortName>UGT1.6</shortName>
    </alternativeName>
</protein>
<reference key="1">
    <citation type="journal article" date="1994" name="Biochemistry">
        <title>Cloning and characterization of cDNAs encoding mouse Ugt1.6 and rabbit UGT1.6: differential induction by 2,3,7,8-tetrachlorodibenzo-p-dioxin.</title>
        <authorList>
            <person name="Lamb J.G."/>
            <person name="Straub P."/>
            <person name="Tukey R.H."/>
        </authorList>
    </citation>
    <scope>NUCLEOTIDE SEQUENCE [MRNA]</scope>
    <scope>CHARACTERIZATION</scope>
    <source>
        <strain>New Zealand white</strain>
        <tissue>Liver</tissue>
    </source>
</reference>
<proteinExistence type="evidence at protein level"/>
<gene>
    <name type="primary">UGT1</name>
</gene>
<sequence>MACLLSAAQRASAGVLFVALWGTVLGDRLLVVPQDGSHWLSMQDIVEALGARGHEIVVLVPEVNLLLRESRFYTRRIYPVPFDQEEQSYRYRTFGEKHFTDRSWLSGPQTEYRNNMVVIDMYFINCQSLLRHGDTLDFLRAGKFDALFTDPALPCGVILAEYLGLPSVYLFRGFPCSLEHGFGGSPNPVSYIPRCYTKFSDQMSFPQRVVNFLVNLLEVPLFYCLYSKYEDLAVELLKREVDLPTLFQKDPVWLLRYDFVFEYPRPVMPNMVLIGGINCKKPDVLSQEFEAYVNASGEHGIVVFSLGSMVSEIPEKKAMEIADALGKIPQTVLWRYTGSRPSNLAKNTYLVKWLPQNVLLGHPKTRAFITHSGSHGIYEGICNGVPMVMLPLFGDQMDNAKRIETRGAGVTLNVLEMTSDDLANALKTVINDKSYKENIMRLSSLHKDRPVEPLDLAVFWVEFVMRHKGAAPRPAAHDLTWYQYHSLDVIGFLLAIVLTVAFVTFKCCAFAWGKCFGKKGRVKKAHKSKVH</sequence>
<evidence type="ECO:0000250" key="1">
    <source>
        <dbReference type="UniProtKB" id="P19224"/>
    </source>
</evidence>
<evidence type="ECO:0000250" key="2">
    <source>
        <dbReference type="UniProtKB" id="Q64435"/>
    </source>
</evidence>
<evidence type="ECO:0000255" key="3"/>
<evidence type="ECO:0000305" key="4"/>
<name>UD16_RABIT</name>
<organism>
    <name type="scientific">Oryctolagus cuniculus</name>
    <name type="common">Rabbit</name>
    <dbReference type="NCBI Taxonomy" id="9986"/>
    <lineage>
        <taxon>Eukaryota</taxon>
        <taxon>Metazoa</taxon>
        <taxon>Chordata</taxon>
        <taxon>Craniata</taxon>
        <taxon>Vertebrata</taxon>
        <taxon>Euteleostomi</taxon>
        <taxon>Mammalia</taxon>
        <taxon>Eutheria</taxon>
        <taxon>Euarchontoglires</taxon>
        <taxon>Glires</taxon>
        <taxon>Lagomorpha</taxon>
        <taxon>Leporidae</taxon>
        <taxon>Oryctolagus</taxon>
    </lineage>
</organism>